<organism>
    <name type="scientific">Xylella fastidiosa (strain M23)</name>
    <dbReference type="NCBI Taxonomy" id="405441"/>
    <lineage>
        <taxon>Bacteria</taxon>
        <taxon>Pseudomonadati</taxon>
        <taxon>Pseudomonadota</taxon>
        <taxon>Gammaproteobacteria</taxon>
        <taxon>Lysobacterales</taxon>
        <taxon>Lysobacteraceae</taxon>
        <taxon>Xylella</taxon>
    </lineage>
</organism>
<dbReference type="EC" id="1.3.1.98" evidence="1"/>
<dbReference type="EMBL" id="CP001011">
    <property type="protein sequence ID" value="ACB93457.1"/>
    <property type="molecule type" value="Genomic_DNA"/>
</dbReference>
<dbReference type="RefSeq" id="WP_004084645.1">
    <property type="nucleotide sequence ID" value="NC_010577.1"/>
</dbReference>
<dbReference type="SMR" id="B2I9T6"/>
<dbReference type="GeneID" id="93905815"/>
<dbReference type="KEGG" id="xfn:XfasM23_2059"/>
<dbReference type="HOGENOM" id="CLU_035304_0_0_6"/>
<dbReference type="UniPathway" id="UPA00219"/>
<dbReference type="Proteomes" id="UP000001698">
    <property type="component" value="Chromosome"/>
</dbReference>
<dbReference type="GO" id="GO:0005829">
    <property type="term" value="C:cytosol"/>
    <property type="evidence" value="ECO:0007669"/>
    <property type="project" value="TreeGrafter"/>
</dbReference>
<dbReference type="GO" id="GO:0071949">
    <property type="term" value="F:FAD binding"/>
    <property type="evidence" value="ECO:0007669"/>
    <property type="project" value="InterPro"/>
</dbReference>
<dbReference type="GO" id="GO:0008762">
    <property type="term" value="F:UDP-N-acetylmuramate dehydrogenase activity"/>
    <property type="evidence" value="ECO:0007669"/>
    <property type="project" value="UniProtKB-UniRule"/>
</dbReference>
<dbReference type="GO" id="GO:0051301">
    <property type="term" value="P:cell division"/>
    <property type="evidence" value="ECO:0007669"/>
    <property type="project" value="UniProtKB-KW"/>
</dbReference>
<dbReference type="GO" id="GO:0071555">
    <property type="term" value="P:cell wall organization"/>
    <property type="evidence" value="ECO:0007669"/>
    <property type="project" value="UniProtKB-KW"/>
</dbReference>
<dbReference type="GO" id="GO:0009252">
    <property type="term" value="P:peptidoglycan biosynthetic process"/>
    <property type="evidence" value="ECO:0007669"/>
    <property type="project" value="UniProtKB-UniRule"/>
</dbReference>
<dbReference type="GO" id="GO:0008360">
    <property type="term" value="P:regulation of cell shape"/>
    <property type="evidence" value="ECO:0007669"/>
    <property type="project" value="UniProtKB-KW"/>
</dbReference>
<dbReference type="Gene3D" id="3.30.465.10">
    <property type="match status" value="1"/>
</dbReference>
<dbReference type="Gene3D" id="3.90.78.10">
    <property type="entry name" value="UDP-N-acetylenolpyruvoylglucosamine reductase, C-terminal domain"/>
    <property type="match status" value="1"/>
</dbReference>
<dbReference type="Gene3D" id="3.30.43.10">
    <property type="entry name" value="Uridine Diphospho-n-acetylenolpyruvylglucosamine Reductase, domain 2"/>
    <property type="match status" value="1"/>
</dbReference>
<dbReference type="HAMAP" id="MF_00037">
    <property type="entry name" value="MurB"/>
    <property type="match status" value="1"/>
</dbReference>
<dbReference type="InterPro" id="IPR016166">
    <property type="entry name" value="FAD-bd_PCMH"/>
</dbReference>
<dbReference type="InterPro" id="IPR036318">
    <property type="entry name" value="FAD-bd_PCMH-like_sf"/>
</dbReference>
<dbReference type="InterPro" id="IPR016167">
    <property type="entry name" value="FAD-bd_PCMH_sub1"/>
</dbReference>
<dbReference type="InterPro" id="IPR016169">
    <property type="entry name" value="FAD-bd_PCMH_sub2"/>
</dbReference>
<dbReference type="InterPro" id="IPR003170">
    <property type="entry name" value="MurB"/>
</dbReference>
<dbReference type="InterPro" id="IPR011601">
    <property type="entry name" value="MurB_C"/>
</dbReference>
<dbReference type="InterPro" id="IPR036635">
    <property type="entry name" value="MurB_C_sf"/>
</dbReference>
<dbReference type="InterPro" id="IPR006094">
    <property type="entry name" value="Oxid_FAD_bind_N"/>
</dbReference>
<dbReference type="NCBIfam" id="TIGR00179">
    <property type="entry name" value="murB"/>
    <property type="match status" value="1"/>
</dbReference>
<dbReference type="NCBIfam" id="NF000755">
    <property type="entry name" value="PRK00046.1"/>
    <property type="match status" value="1"/>
</dbReference>
<dbReference type="NCBIfam" id="NF010478">
    <property type="entry name" value="PRK13903.1"/>
    <property type="match status" value="1"/>
</dbReference>
<dbReference type="PANTHER" id="PTHR21071">
    <property type="entry name" value="UDP-N-ACETYLENOLPYRUVOYLGLUCOSAMINE REDUCTASE"/>
    <property type="match status" value="1"/>
</dbReference>
<dbReference type="PANTHER" id="PTHR21071:SF4">
    <property type="entry name" value="UDP-N-ACETYLENOLPYRUVOYLGLUCOSAMINE REDUCTASE"/>
    <property type="match status" value="1"/>
</dbReference>
<dbReference type="Pfam" id="PF01565">
    <property type="entry name" value="FAD_binding_4"/>
    <property type="match status" value="1"/>
</dbReference>
<dbReference type="Pfam" id="PF02873">
    <property type="entry name" value="MurB_C"/>
    <property type="match status" value="1"/>
</dbReference>
<dbReference type="SUPFAM" id="SSF56176">
    <property type="entry name" value="FAD-binding/transporter-associated domain-like"/>
    <property type="match status" value="1"/>
</dbReference>
<dbReference type="SUPFAM" id="SSF56194">
    <property type="entry name" value="Uridine diphospho-N-Acetylenolpyruvylglucosamine reductase, MurB, C-terminal domain"/>
    <property type="match status" value="1"/>
</dbReference>
<dbReference type="PROSITE" id="PS51387">
    <property type="entry name" value="FAD_PCMH"/>
    <property type="match status" value="1"/>
</dbReference>
<name>MURB_XYLF2</name>
<proteinExistence type="inferred from homology"/>
<comment type="function">
    <text evidence="1">Cell wall formation.</text>
</comment>
<comment type="catalytic activity">
    <reaction evidence="1">
        <text>UDP-N-acetyl-alpha-D-muramate + NADP(+) = UDP-N-acetyl-3-O-(1-carboxyvinyl)-alpha-D-glucosamine + NADPH + H(+)</text>
        <dbReference type="Rhea" id="RHEA:12248"/>
        <dbReference type="ChEBI" id="CHEBI:15378"/>
        <dbReference type="ChEBI" id="CHEBI:57783"/>
        <dbReference type="ChEBI" id="CHEBI:58349"/>
        <dbReference type="ChEBI" id="CHEBI:68483"/>
        <dbReference type="ChEBI" id="CHEBI:70757"/>
        <dbReference type="EC" id="1.3.1.98"/>
    </reaction>
</comment>
<comment type="cofactor">
    <cofactor evidence="1">
        <name>FAD</name>
        <dbReference type="ChEBI" id="CHEBI:57692"/>
    </cofactor>
</comment>
<comment type="pathway">
    <text evidence="1">Cell wall biogenesis; peptidoglycan biosynthesis.</text>
</comment>
<comment type="subcellular location">
    <subcellularLocation>
        <location evidence="1">Cytoplasm</location>
    </subcellularLocation>
</comment>
<comment type="similarity">
    <text evidence="1">Belongs to the MurB family.</text>
</comment>
<gene>
    <name evidence="1" type="primary">murB</name>
    <name type="ordered locus">XfasM23_2059</name>
</gene>
<protein>
    <recommendedName>
        <fullName evidence="1">UDP-N-acetylenolpyruvoylglucosamine reductase</fullName>
        <ecNumber evidence="1">1.3.1.98</ecNumber>
    </recommendedName>
    <alternativeName>
        <fullName evidence="1">UDP-N-acetylmuramate dehydrogenase</fullName>
    </alternativeName>
</protein>
<evidence type="ECO:0000255" key="1">
    <source>
        <dbReference type="HAMAP-Rule" id="MF_00037"/>
    </source>
</evidence>
<accession>B2I9T6</accession>
<feature type="chain" id="PRO_1000117151" description="UDP-N-acetylenolpyruvoylglucosamine reductase">
    <location>
        <begin position="1"/>
        <end position="351"/>
    </location>
</feature>
<feature type="domain" description="FAD-binding PCMH-type" evidence="1">
    <location>
        <begin position="25"/>
        <end position="196"/>
    </location>
</feature>
<feature type="active site" evidence="1">
    <location>
        <position position="173"/>
    </location>
</feature>
<feature type="active site" description="Proton donor" evidence="1">
    <location>
        <position position="246"/>
    </location>
</feature>
<feature type="active site" evidence="1">
    <location>
        <position position="343"/>
    </location>
</feature>
<reference key="1">
    <citation type="journal article" date="2010" name="J. Bacteriol.">
        <title>Whole genome sequences of two Xylella fastidiosa strains (M12 and M23) causing almond leaf scorch disease in California.</title>
        <authorList>
            <person name="Chen J."/>
            <person name="Xie G."/>
            <person name="Han S."/>
            <person name="Chertkov O."/>
            <person name="Sims D."/>
            <person name="Civerolo E.L."/>
        </authorList>
    </citation>
    <scope>NUCLEOTIDE SEQUENCE [LARGE SCALE GENOMIC DNA]</scope>
    <source>
        <strain>M23</strain>
    </source>
</reference>
<sequence>MSRQINTPDWILHANAPLRELNTFHIQAQARWLLEIIHPTALPQALTHPHIVGLPILVLGSGSNVLFAADPEECVLRFVNREVTILEHRIDHTLVRAGAGMAWHDLVLWSLQQGLSGLENLALIPGTVGACSIQNIGAYGVQVEEFVHIVEAYDQTEGKFVRLTASECEFAYRNSRFKREPNRYLITAVEFRLPLLHELNLNYAGISEELEALQITLPEPCDVAQAVINLRRRKLPDPEVLSNAGSFFKNPHLPREQAEQLRQHHPTLPIYPGETPESNKLSAAWLIEQCGWKGIREGDAGVAPQHSLVLVNYGEATGAELLALARRIAASVQERFGVAIEPETRLIGAQW</sequence>
<keyword id="KW-0131">Cell cycle</keyword>
<keyword id="KW-0132">Cell division</keyword>
<keyword id="KW-0133">Cell shape</keyword>
<keyword id="KW-0961">Cell wall biogenesis/degradation</keyword>
<keyword id="KW-0963">Cytoplasm</keyword>
<keyword id="KW-0274">FAD</keyword>
<keyword id="KW-0285">Flavoprotein</keyword>
<keyword id="KW-0521">NADP</keyword>
<keyword id="KW-0560">Oxidoreductase</keyword>
<keyword id="KW-0573">Peptidoglycan synthesis</keyword>